<accession>A0QYS8</accession>
<accession>I7G3K5</accession>
<gene>
    <name evidence="3" type="primary">argF</name>
    <name type="ordered locus">MSMEG_3772</name>
    <name type="ordered locus">MSMEI_3683</name>
</gene>
<evidence type="ECO:0000255" key="1">
    <source>
        <dbReference type="HAMAP-Rule" id="MF_01109"/>
    </source>
</evidence>
<evidence type="ECO:0000269" key="2">
    <source>
    </source>
</evidence>
<evidence type="ECO:0000303" key="3">
    <source>
    </source>
</evidence>
<evidence type="ECO:0000305" key="4"/>
<evidence type="ECO:0000305" key="5">
    <source>
    </source>
</evidence>
<sequence>MIRHFLRDDDLSPEEQAEVLTLAADLKKTPFSRRPLEGPRGVAVIFEKNSTRTRFSFEMGIAQLGGHAIVVDGRSTQLGREETLEDTGAVLSRYVDAIVWRTFAQERLTAMASGASVPIVNALSDEFHPCQVLADLQTLAERKGKLAGLRMTYFGDGANNMAHSLMLGGVTAGVHVTIAAPDGFEPDPRFVDAARRRAAETGATVALTKDAKAGADGADVLVTDTWTSMGQENDGLDRVRPFRPFQVNADLLELADPAAVVLHCLPAHRGHEITDEVIDGPQSAVFDEAENRLHAQKALLVWLLEKR</sequence>
<keyword id="KW-0028">Amino-acid biosynthesis</keyword>
<keyword id="KW-0055">Arginine biosynthesis</keyword>
<keyword id="KW-0963">Cytoplasm</keyword>
<keyword id="KW-1185">Reference proteome</keyword>
<keyword id="KW-0808">Transferase</keyword>
<comment type="function">
    <text evidence="2">Reversibly catalyzes the transfer of the carbamoyl group from carbamoyl phosphate (CP) to the N(epsilon) atom of ornithine (ORN) to produce L-citrulline, which is a substrate for argininosuccinate synthetase, the enzyme involved in the final step in arginine biosynthesis.</text>
</comment>
<comment type="catalytic activity">
    <reaction evidence="5">
        <text>carbamoyl phosphate + L-ornithine = L-citrulline + phosphate + H(+)</text>
        <dbReference type="Rhea" id="RHEA:19513"/>
        <dbReference type="ChEBI" id="CHEBI:15378"/>
        <dbReference type="ChEBI" id="CHEBI:43474"/>
        <dbReference type="ChEBI" id="CHEBI:46911"/>
        <dbReference type="ChEBI" id="CHEBI:57743"/>
        <dbReference type="ChEBI" id="CHEBI:58228"/>
        <dbReference type="EC" id="2.1.3.3"/>
    </reaction>
</comment>
<comment type="activity regulation">
    <text evidence="2">Inhibited by arginine, norvaline.</text>
</comment>
<comment type="biophysicochemical properties">
    <kinetics>
        <KM evidence="2">0.2 mM for carbamoyl phosphate</KM>
        <KM evidence="2">0.25 mM for L-ornithine</KM>
    </kinetics>
</comment>
<comment type="pathway">
    <text evidence="1">Amino-acid biosynthesis; L-arginine biosynthesis; L-arginine from L-ornithine and carbamoyl phosphate: step 1/3.</text>
</comment>
<comment type="subcellular location">
    <subcellularLocation>
        <location evidence="4">Cytoplasm</location>
    </subcellularLocation>
</comment>
<comment type="similarity">
    <text evidence="4">Belongs to the aspartate/ornithine carbamoyltransferase superfamily. OTCase family.</text>
</comment>
<feature type="chain" id="PRO_1000073030" description="Ornithine carbamoyltransferase">
    <location>
        <begin position="1"/>
        <end position="307"/>
    </location>
</feature>
<feature type="binding site" evidence="1">
    <location>
        <begin position="50"/>
        <end position="53"/>
    </location>
    <ligand>
        <name>carbamoyl phosphate</name>
        <dbReference type="ChEBI" id="CHEBI:58228"/>
    </ligand>
</feature>
<feature type="binding site" evidence="1">
    <location>
        <position position="77"/>
    </location>
    <ligand>
        <name>carbamoyl phosphate</name>
        <dbReference type="ChEBI" id="CHEBI:58228"/>
    </ligand>
</feature>
<feature type="binding site" evidence="1">
    <location>
        <position position="101"/>
    </location>
    <ligand>
        <name>carbamoyl phosphate</name>
        <dbReference type="ChEBI" id="CHEBI:58228"/>
    </ligand>
</feature>
<feature type="binding site" evidence="1">
    <location>
        <begin position="128"/>
        <end position="131"/>
    </location>
    <ligand>
        <name>carbamoyl phosphate</name>
        <dbReference type="ChEBI" id="CHEBI:58228"/>
    </ligand>
</feature>
<feature type="binding site" evidence="1">
    <location>
        <position position="160"/>
    </location>
    <ligand>
        <name>L-ornithine</name>
        <dbReference type="ChEBI" id="CHEBI:46911"/>
    </ligand>
</feature>
<feature type="binding site" evidence="1">
    <location>
        <position position="224"/>
    </location>
    <ligand>
        <name>L-ornithine</name>
        <dbReference type="ChEBI" id="CHEBI:46911"/>
    </ligand>
</feature>
<feature type="binding site" evidence="1">
    <location>
        <begin position="228"/>
        <end position="229"/>
    </location>
    <ligand>
        <name>L-ornithine</name>
        <dbReference type="ChEBI" id="CHEBI:46911"/>
    </ligand>
</feature>
<feature type="binding site" evidence="1">
    <location>
        <begin position="264"/>
        <end position="265"/>
    </location>
    <ligand>
        <name>carbamoyl phosphate</name>
        <dbReference type="ChEBI" id="CHEBI:58228"/>
    </ligand>
</feature>
<feature type="binding site" evidence="1">
    <location>
        <position position="292"/>
    </location>
    <ligand>
        <name>carbamoyl phosphate</name>
        <dbReference type="ChEBI" id="CHEBI:58228"/>
    </ligand>
</feature>
<proteinExistence type="evidence at protein level"/>
<organism>
    <name type="scientific">Mycolicibacterium smegmatis (strain ATCC 700084 / mc(2)155)</name>
    <name type="common">Mycobacterium smegmatis</name>
    <dbReference type="NCBI Taxonomy" id="246196"/>
    <lineage>
        <taxon>Bacteria</taxon>
        <taxon>Bacillati</taxon>
        <taxon>Actinomycetota</taxon>
        <taxon>Actinomycetes</taxon>
        <taxon>Mycobacteriales</taxon>
        <taxon>Mycobacteriaceae</taxon>
        <taxon>Mycolicibacterium</taxon>
    </lineage>
</organism>
<name>OTC_MYCS2</name>
<dbReference type="EC" id="2.1.3.3" evidence="5"/>
<dbReference type="EMBL" id="CP000480">
    <property type="protein sequence ID" value="ABK75220.1"/>
    <property type="molecule type" value="Genomic_DNA"/>
</dbReference>
<dbReference type="EMBL" id="CP001663">
    <property type="protein sequence ID" value="AFP40142.1"/>
    <property type="molecule type" value="Genomic_DNA"/>
</dbReference>
<dbReference type="RefSeq" id="WP_011729314.1">
    <property type="nucleotide sequence ID" value="NZ_SIJM01000005.1"/>
</dbReference>
<dbReference type="RefSeq" id="YP_888066.1">
    <property type="nucleotide sequence ID" value="NC_008596.1"/>
</dbReference>
<dbReference type="SMR" id="A0QYS8"/>
<dbReference type="STRING" id="246196.MSMEG_3772"/>
<dbReference type="PaxDb" id="246196-MSMEI_3683"/>
<dbReference type="GeneID" id="93458514"/>
<dbReference type="KEGG" id="msb:LJ00_18740"/>
<dbReference type="KEGG" id="msg:MSMEI_3683"/>
<dbReference type="KEGG" id="msm:MSMEG_3772"/>
<dbReference type="PATRIC" id="fig|246196.19.peg.3711"/>
<dbReference type="eggNOG" id="COG0078">
    <property type="taxonomic scope" value="Bacteria"/>
</dbReference>
<dbReference type="OrthoDB" id="9802587at2"/>
<dbReference type="UniPathway" id="UPA00068">
    <property type="reaction ID" value="UER00112"/>
</dbReference>
<dbReference type="Proteomes" id="UP000000757">
    <property type="component" value="Chromosome"/>
</dbReference>
<dbReference type="Proteomes" id="UP000006158">
    <property type="component" value="Chromosome"/>
</dbReference>
<dbReference type="GO" id="GO:0005737">
    <property type="term" value="C:cytoplasm"/>
    <property type="evidence" value="ECO:0007669"/>
    <property type="project" value="UniProtKB-SubCell"/>
</dbReference>
<dbReference type="GO" id="GO:0016597">
    <property type="term" value="F:amino acid binding"/>
    <property type="evidence" value="ECO:0007669"/>
    <property type="project" value="InterPro"/>
</dbReference>
<dbReference type="GO" id="GO:0004585">
    <property type="term" value="F:ornithine carbamoyltransferase activity"/>
    <property type="evidence" value="ECO:0007669"/>
    <property type="project" value="UniProtKB-UniRule"/>
</dbReference>
<dbReference type="GO" id="GO:0042450">
    <property type="term" value="P:arginine biosynthetic process via ornithine"/>
    <property type="evidence" value="ECO:0007669"/>
    <property type="project" value="TreeGrafter"/>
</dbReference>
<dbReference type="GO" id="GO:0019240">
    <property type="term" value="P:citrulline biosynthetic process"/>
    <property type="evidence" value="ECO:0007669"/>
    <property type="project" value="TreeGrafter"/>
</dbReference>
<dbReference type="GO" id="GO:0006526">
    <property type="term" value="P:L-arginine biosynthetic process"/>
    <property type="evidence" value="ECO:0007669"/>
    <property type="project" value="UniProtKB-UniRule"/>
</dbReference>
<dbReference type="FunFam" id="3.40.50.1370:FF:000008">
    <property type="entry name" value="Ornithine carbamoyltransferase"/>
    <property type="match status" value="1"/>
</dbReference>
<dbReference type="Gene3D" id="3.40.50.1370">
    <property type="entry name" value="Aspartate/ornithine carbamoyltransferase"/>
    <property type="match status" value="2"/>
</dbReference>
<dbReference type="HAMAP" id="MF_01109">
    <property type="entry name" value="OTCase"/>
    <property type="match status" value="1"/>
</dbReference>
<dbReference type="InterPro" id="IPR006132">
    <property type="entry name" value="Asp/Orn_carbamoyltranf_P-bd"/>
</dbReference>
<dbReference type="InterPro" id="IPR006130">
    <property type="entry name" value="Asp/Orn_carbamoylTrfase"/>
</dbReference>
<dbReference type="InterPro" id="IPR036901">
    <property type="entry name" value="Asp/Orn_carbamoylTrfase_sf"/>
</dbReference>
<dbReference type="InterPro" id="IPR006131">
    <property type="entry name" value="Asp_carbamoyltransf_Asp/Orn-bd"/>
</dbReference>
<dbReference type="InterPro" id="IPR002292">
    <property type="entry name" value="Orn/put_carbamltrans"/>
</dbReference>
<dbReference type="InterPro" id="IPR024904">
    <property type="entry name" value="OTCase_ArgI"/>
</dbReference>
<dbReference type="NCBIfam" id="TIGR00658">
    <property type="entry name" value="orni_carb_tr"/>
    <property type="match status" value="1"/>
</dbReference>
<dbReference type="NCBIfam" id="NF001986">
    <property type="entry name" value="PRK00779.1"/>
    <property type="match status" value="1"/>
</dbReference>
<dbReference type="PANTHER" id="PTHR45753">
    <property type="entry name" value="ORNITHINE CARBAMOYLTRANSFERASE, MITOCHONDRIAL"/>
    <property type="match status" value="1"/>
</dbReference>
<dbReference type="PANTHER" id="PTHR45753:SF3">
    <property type="entry name" value="ORNITHINE TRANSCARBAMYLASE, MITOCHONDRIAL"/>
    <property type="match status" value="1"/>
</dbReference>
<dbReference type="Pfam" id="PF00185">
    <property type="entry name" value="OTCace"/>
    <property type="match status" value="1"/>
</dbReference>
<dbReference type="Pfam" id="PF02729">
    <property type="entry name" value="OTCace_N"/>
    <property type="match status" value="1"/>
</dbReference>
<dbReference type="PRINTS" id="PR00100">
    <property type="entry name" value="AOTCASE"/>
</dbReference>
<dbReference type="PRINTS" id="PR00102">
    <property type="entry name" value="OTCASE"/>
</dbReference>
<dbReference type="SUPFAM" id="SSF53671">
    <property type="entry name" value="Aspartate/ornithine carbamoyltransferase"/>
    <property type="match status" value="1"/>
</dbReference>
<dbReference type="PROSITE" id="PS00097">
    <property type="entry name" value="CARBAMOYLTRANSFERASE"/>
    <property type="match status" value="1"/>
</dbReference>
<protein>
    <recommendedName>
        <fullName evidence="3">Ornithine carbamoyltransferase</fullName>
        <shortName evidence="3">OTCase</shortName>
        <ecNumber evidence="5">2.1.3.3</ecNumber>
    </recommendedName>
</protein>
<reference key="1">
    <citation type="submission" date="2006-10" db="EMBL/GenBank/DDBJ databases">
        <authorList>
            <person name="Fleischmann R.D."/>
            <person name="Dodson R.J."/>
            <person name="Haft D.H."/>
            <person name="Merkel J.S."/>
            <person name="Nelson W.C."/>
            <person name="Fraser C.M."/>
        </authorList>
    </citation>
    <scope>NUCLEOTIDE SEQUENCE [LARGE SCALE GENOMIC DNA]</scope>
    <source>
        <strain>ATCC 700084 / mc(2)155</strain>
    </source>
</reference>
<reference key="2">
    <citation type="journal article" date="2007" name="Genome Biol.">
        <title>Interrupted coding sequences in Mycobacterium smegmatis: authentic mutations or sequencing errors?</title>
        <authorList>
            <person name="Deshayes C."/>
            <person name="Perrodou E."/>
            <person name="Gallien S."/>
            <person name="Euphrasie D."/>
            <person name="Schaeffer C."/>
            <person name="Van-Dorsselaer A."/>
            <person name="Poch O."/>
            <person name="Lecompte O."/>
            <person name="Reyrat J.-M."/>
        </authorList>
    </citation>
    <scope>NUCLEOTIDE SEQUENCE [LARGE SCALE GENOMIC DNA]</scope>
    <source>
        <strain>ATCC 700084 / mc(2)155</strain>
    </source>
</reference>
<reference key="3">
    <citation type="journal article" date="2009" name="Genome Res.">
        <title>Ortho-proteogenomics: multiple proteomes investigation through orthology and a new MS-based protocol.</title>
        <authorList>
            <person name="Gallien S."/>
            <person name="Perrodou E."/>
            <person name="Carapito C."/>
            <person name="Deshayes C."/>
            <person name="Reyrat J.-M."/>
            <person name="Van Dorsselaer A."/>
            <person name="Poch O."/>
            <person name="Schaeffer C."/>
            <person name="Lecompte O."/>
        </authorList>
    </citation>
    <scope>NUCLEOTIDE SEQUENCE [LARGE SCALE GENOMIC DNA]</scope>
    <scope>IDENTIFICATION BY MASS SPECTROMETRY [LARGE SCALE ANALYSIS]</scope>
    <source>
        <strain>ATCC 700084 / mc(2)155</strain>
    </source>
</reference>
<reference key="4">
    <citation type="journal article" date="1986" name="Biochem. Cell Biol.">
        <title>Ornithine transcarbamylase from Mycobacterium smegmatis ATCC 14468: purification, properties, and reaction mechanism.</title>
        <authorList>
            <person name="Ahmad S."/>
            <person name="Bhatnagar R.K."/>
            <person name="Venkitasubramanian T.A."/>
        </authorList>
    </citation>
    <scope>FUNCTION AS AN OTCASE</scope>
    <scope>CATALYTIC ACTIVITY</scope>
    <scope>ACTIVITY REGULATION</scope>
    <scope>BIOPHYSICOCHEMICAL PROPERTIES</scope>
    <source>
        <strain>ATCC 14468</strain>
    </source>
</reference>